<evidence type="ECO:0000255" key="1">
    <source>
        <dbReference type="HAMAP-Rule" id="MF_01637"/>
    </source>
</evidence>
<name>NFUA_PSEP1</name>
<keyword id="KW-0004">4Fe-4S</keyword>
<keyword id="KW-0408">Iron</keyword>
<keyword id="KW-0411">Iron-sulfur</keyword>
<keyword id="KW-0479">Metal-binding</keyword>
<organism>
    <name type="scientific">Pseudomonas putida (strain ATCC 700007 / DSM 6899 / JCM 31910 / BCRC 17059 / LMG 24140 / F1)</name>
    <dbReference type="NCBI Taxonomy" id="351746"/>
    <lineage>
        <taxon>Bacteria</taxon>
        <taxon>Pseudomonadati</taxon>
        <taxon>Pseudomonadota</taxon>
        <taxon>Gammaproteobacteria</taxon>
        <taxon>Pseudomonadales</taxon>
        <taxon>Pseudomonadaceae</taxon>
        <taxon>Pseudomonas</taxon>
    </lineage>
</organism>
<comment type="function">
    <text evidence="1">Involved in iron-sulfur cluster biogenesis. Binds a 4Fe-4S cluster, can transfer this cluster to apoproteins, and thereby intervenes in the maturation of Fe/S proteins. Could also act as a scaffold/chaperone for damaged Fe/S proteins.</text>
</comment>
<comment type="cofactor">
    <cofactor evidence="1">
        <name>[4Fe-4S] cluster</name>
        <dbReference type="ChEBI" id="CHEBI:49883"/>
    </cofactor>
    <text evidence="1">Binds 1 [4Fe-4S] cluster per subunit. The cluster is presumably bound at the interface of two monomers.</text>
</comment>
<comment type="subunit">
    <text evidence="1">Homodimer.</text>
</comment>
<comment type="similarity">
    <text evidence="1">Belongs to the NfuA family.</text>
</comment>
<protein>
    <recommendedName>
        <fullName evidence="1">Fe/S biogenesis protein NfuA</fullName>
    </recommendedName>
</protein>
<accession>A5W5N3</accession>
<sequence>MSAITITDAAHDYLADLLSKQNTPGIGIRIFITQPGTQYAETCIAYCKPGEEKPDDTAVGLKSFTAYLDAVSVPFLEDALVDYATDRMGGQLTIKAPNAKVPMVNEDSPINERINYYLQTEINPGLASHGGQVSLVDVVDDGIAVLQFGGGCQGCGQADVTLKEGIERTLLERIPELKGVRDVTDHSQKENAYY</sequence>
<reference key="1">
    <citation type="submission" date="2007-05" db="EMBL/GenBank/DDBJ databases">
        <title>Complete sequence of Pseudomonas putida F1.</title>
        <authorList>
            <consortium name="US DOE Joint Genome Institute"/>
            <person name="Copeland A."/>
            <person name="Lucas S."/>
            <person name="Lapidus A."/>
            <person name="Barry K."/>
            <person name="Detter J.C."/>
            <person name="Glavina del Rio T."/>
            <person name="Hammon N."/>
            <person name="Israni S."/>
            <person name="Dalin E."/>
            <person name="Tice H."/>
            <person name="Pitluck S."/>
            <person name="Chain P."/>
            <person name="Malfatti S."/>
            <person name="Shin M."/>
            <person name="Vergez L."/>
            <person name="Schmutz J."/>
            <person name="Larimer F."/>
            <person name="Land M."/>
            <person name="Hauser L."/>
            <person name="Kyrpides N."/>
            <person name="Lykidis A."/>
            <person name="Parales R."/>
            <person name="Richardson P."/>
        </authorList>
    </citation>
    <scope>NUCLEOTIDE SEQUENCE [LARGE SCALE GENOMIC DNA]</scope>
    <source>
        <strain>ATCC 700007 / DSM 6899 / JCM 31910 / BCRC 17059 / LMG 24140 / F1</strain>
    </source>
</reference>
<gene>
    <name evidence="1" type="primary">nfuA</name>
    <name type="ordered locus">Pput_3317</name>
</gene>
<proteinExistence type="inferred from homology"/>
<feature type="chain" id="PRO_1000186764" description="Fe/S biogenesis protein NfuA">
    <location>
        <begin position="1"/>
        <end position="194"/>
    </location>
</feature>
<feature type="binding site" evidence="1">
    <location>
        <position position="152"/>
    </location>
    <ligand>
        <name>[4Fe-4S] cluster</name>
        <dbReference type="ChEBI" id="CHEBI:49883"/>
    </ligand>
</feature>
<feature type="binding site" evidence="1">
    <location>
        <position position="155"/>
    </location>
    <ligand>
        <name>[4Fe-4S] cluster</name>
        <dbReference type="ChEBI" id="CHEBI:49883"/>
    </ligand>
</feature>
<dbReference type="EMBL" id="CP000712">
    <property type="protein sequence ID" value="ABQ79443.1"/>
    <property type="molecule type" value="Genomic_DNA"/>
</dbReference>
<dbReference type="SMR" id="A5W5N3"/>
<dbReference type="KEGG" id="ppf:Pput_3317"/>
<dbReference type="eggNOG" id="COG0316">
    <property type="taxonomic scope" value="Bacteria"/>
</dbReference>
<dbReference type="eggNOG" id="COG0694">
    <property type="taxonomic scope" value="Bacteria"/>
</dbReference>
<dbReference type="HOGENOM" id="CLU_094569_0_0_6"/>
<dbReference type="GO" id="GO:0051539">
    <property type="term" value="F:4 iron, 4 sulfur cluster binding"/>
    <property type="evidence" value="ECO:0007669"/>
    <property type="project" value="UniProtKB-UniRule"/>
</dbReference>
<dbReference type="GO" id="GO:0005506">
    <property type="term" value="F:iron ion binding"/>
    <property type="evidence" value="ECO:0007669"/>
    <property type="project" value="InterPro"/>
</dbReference>
<dbReference type="GO" id="GO:0016226">
    <property type="term" value="P:iron-sulfur cluster assembly"/>
    <property type="evidence" value="ECO:0007669"/>
    <property type="project" value="UniProtKB-UniRule"/>
</dbReference>
<dbReference type="GO" id="GO:0051604">
    <property type="term" value="P:protein maturation"/>
    <property type="evidence" value="ECO:0007669"/>
    <property type="project" value="UniProtKB-UniRule"/>
</dbReference>
<dbReference type="Gene3D" id="3.30.300.130">
    <property type="entry name" value="Fe-S cluster assembly (FSCA)"/>
    <property type="match status" value="1"/>
</dbReference>
<dbReference type="Gene3D" id="2.60.300.12">
    <property type="entry name" value="HesB-like domain"/>
    <property type="match status" value="1"/>
</dbReference>
<dbReference type="HAMAP" id="MF_01637">
    <property type="entry name" value="Fe_S_biogen_NfuA"/>
    <property type="match status" value="1"/>
</dbReference>
<dbReference type="InterPro" id="IPR017726">
    <property type="entry name" value="Fe/S_biogenesis_protein_NfuA"/>
</dbReference>
<dbReference type="InterPro" id="IPR000361">
    <property type="entry name" value="FeS_biogenesis"/>
</dbReference>
<dbReference type="InterPro" id="IPR034904">
    <property type="entry name" value="FSCA_dom_sf"/>
</dbReference>
<dbReference type="InterPro" id="IPR035903">
    <property type="entry name" value="HesB-like_dom_sf"/>
</dbReference>
<dbReference type="InterPro" id="IPR001075">
    <property type="entry name" value="NIF_FeS_clus_asmbl_NifU_C"/>
</dbReference>
<dbReference type="NCBIfam" id="TIGR03341">
    <property type="entry name" value="YhgI_GntY"/>
    <property type="match status" value="1"/>
</dbReference>
<dbReference type="PANTHER" id="PTHR11178:SF51">
    <property type="entry name" value="FE_S BIOGENESIS PROTEIN NFUA"/>
    <property type="match status" value="1"/>
</dbReference>
<dbReference type="PANTHER" id="PTHR11178">
    <property type="entry name" value="IRON-SULFUR CLUSTER SCAFFOLD PROTEIN NFU-RELATED"/>
    <property type="match status" value="1"/>
</dbReference>
<dbReference type="Pfam" id="PF01521">
    <property type="entry name" value="Fe-S_biosyn"/>
    <property type="match status" value="1"/>
</dbReference>
<dbReference type="Pfam" id="PF01106">
    <property type="entry name" value="NifU"/>
    <property type="match status" value="1"/>
</dbReference>
<dbReference type="SUPFAM" id="SSF117916">
    <property type="entry name" value="Fe-S cluster assembly (FSCA) domain-like"/>
    <property type="match status" value="1"/>
</dbReference>
<dbReference type="SUPFAM" id="SSF89360">
    <property type="entry name" value="HesB-like domain"/>
    <property type="match status" value="1"/>
</dbReference>